<organism>
    <name type="scientific">Campylobacter hominis (strain ATCC BAA-381 / DSM 21671 / CCUG 45161 / LMG 19568 / NCTC 13146 / CH001A)</name>
    <dbReference type="NCBI Taxonomy" id="360107"/>
    <lineage>
        <taxon>Bacteria</taxon>
        <taxon>Pseudomonadati</taxon>
        <taxon>Campylobacterota</taxon>
        <taxon>Epsilonproteobacteria</taxon>
        <taxon>Campylobacterales</taxon>
        <taxon>Campylobacteraceae</taxon>
        <taxon>Campylobacter</taxon>
    </lineage>
</organism>
<dbReference type="EC" id="4.1.99.17" evidence="1"/>
<dbReference type="EMBL" id="CP000776">
    <property type="protein sequence ID" value="ABS51042.1"/>
    <property type="molecule type" value="Genomic_DNA"/>
</dbReference>
<dbReference type="RefSeq" id="WP_012108540.1">
    <property type="nucleotide sequence ID" value="NC_009714.1"/>
</dbReference>
<dbReference type="SMR" id="A7I162"/>
<dbReference type="STRING" id="360107.CHAB381_0672"/>
<dbReference type="KEGG" id="cha:CHAB381_0672"/>
<dbReference type="eggNOG" id="COG0422">
    <property type="taxonomic scope" value="Bacteria"/>
</dbReference>
<dbReference type="HOGENOM" id="CLU_013181_2_1_7"/>
<dbReference type="OrthoDB" id="9805897at2"/>
<dbReference type="UniPathway" id="UPA00060"/>
<dbReference type="Proteomes" id="UP000002407">
    <property type="component" value="Chromosome"/>
</dbReference>
<dbReference type="GO" id="GO:0051539">
    <property type="term" value="F:4 iron, 4 sulfur cluster binding"/>
    <property type="evidence" value="ECO:0007669"/>
    <property type="project" value="UniProtKB-KW"/>
</dbReference>
<dbReference type="GO" id="GO:0016830">
    <property type="term" value="F:carbon-carbon lyase activity"/>
    <property type="evidence" value="ECO:0007669"/>
    <property type="project" value="InterPro"/>
</dbReference>
<dbReference type="GO" id="GO:0008270">
    <property type="term" value="F:zinc ion binding"/>
    <property type="evidence" value="ECO:0007669"/>
    <property type="project" value="UniProtKB-UniRule"/>
</dbReference>
<dbReference type="GO" id="GO:0009228">
    <property type="term" value="P:thiamine biosynthetic process"/>
    <property type="evidence" value="ECO:0007669"/>
    <property type="project" value="UniProtKB-KW"/>
</dbReference>
<dbReference type="GO" id="GO:0009229">
    <property type="term" value="P:thiamine diphosphate biosynthetic process"/>
    <property type="evidence" value="ECO:0007669"/>
    <property type="project" value="UniProtKB-UniRule"/>
</dbReference>
<dbReference type="FunFam" id="3.20.20.540:FF:000001">
    <property type="entry name" value="Phosphomethylpyrimidine synthase"/>
    <property type="match status" value="1"/>
</dbReference>
<dbReference type="Gene3D" id="6.10.250.620">
    <property type="match status" value="1"/>
</dbReference>
<dbReference type="Gene3D" id="3.20.20.540">
    <property type="entry name" value="Radical SAM ThiC family, central domain"/>
    <property type="match status" value="1"/>
</dbReference>
<dbReference type="HAMAP" id="MF_00089">
    <property type="entry name" value="ThiC"/>
    <property type="match status" value="1"/>
</dbReference>
<dbReference type="InterPro" id="IPR037509">
    <property type="entry name" value="ThiC"/>
</dbReference>
<dbReference type="InterPro" id="IPR038521">
    <property type="entry name" value="ThiC/Bza_core_dom"/>
</dbReference>
<dbReference type="InterPro" id="IPR002817">
    <property type="entry name" value="ThiC/BzaA/B"/>
</dbReference>
<dbReference type="NCBIfam" id="NF006763">
    <property type="entry name" value="PRK09284.1"/>
    <property type="match status" value="1"/>
</dbReference>
<dbReference type="NCBIfam" id="NF009895">
    <property type="entry name" value="PRK13352.1"/>
    <property type="match status" value="1"/>
</dbReference>
<dbReference type="NCBIfam" id="TIGR00190">
    <property type="entry name" value="thiC"/>
    <property type="match status" value="1"/>
</dbReference>
<dbReference type="PANTHER" id="PTHR30557:SF1">
    <property type="entry name" value="PHOSPHOMETHYLPYRIMIDINE SYNTHASE, CHLOROPLASTIC"/>
    <property type="match status" value="1"/>
</dbReference>
<dbReference type="PANTHER" id="PTHR30557">
    <property type="entry name" value="THIAMINE BIOSYNTHESIS PROTEIN THIC"/>
    <property type="match status" value="1"/>
</dbReference>
<dbReference type="Pfam" id="PF01964">
    <property type="entry name" value="ThiC_Rad_SAM"/>
    <property type="match status" value="1"/>
</dbReference>
<dbReference type="SFLD" id="SFLDF00407">
    <property type="entry name" value="phosphomethylpyrimidine_syntha"/>
    <property type="match status" value="1"/>
</dbReference>
<dbReference type="SFLD" id="SFLDG01114">
    <property type="entry name" value="phosphomethylpyrimidine_syntha"/>
    <property type="match status" value="1"/>
</dbReference>
<dbReference type="SFLD" id="SFLDS00113">
    <property type="entry name" value="Radical_SAM_Phosphomethylpyrim"/>
    <property type="match status" value="1"/>
</dbReference>
<proteinExistence type="inferred from homology"/>
<feature type="chain" id="PRO_1000004749" description="Phosphomethylpyrimidine synthase">
    <location>
        <begin position="1"/>
        <end position="449"/>
    </location>
</feature>
<feature type="binding site" evidence="1">
    <location>
        <position position="80"/>
    </location>
    <ligand>
        <name>substrate</name>
    </ligand>
</feature>
<feature type="binding site" evidence="1">
    <location>
        <position position="109"/>
    </location>
    <ligand>
        <name>substrate</name>
    </ligand>
</feature>
<feature type="binding site" evidence="1">
    <location>
        <position position="138"/>
    </location>
    <ligand>
        <name>substrate</name>
    </ligand>
</feature>
<feature type="binding site" evidence="1">
    <location>
        <position position="173"/>
    </location>
    <ligand>
        <name>substrate</name>
    </ligand>
</feature>
<feature type="binding site" evidence="1">
    <location>
        <begin position="193"/>
        <end position="195"/>
    </location>
    <ligand>
        <name>substrate</name>
    </ligand>
</feature>
<feature type="binding site" evidence="1">
    <location>
        <begin position="234"/>
        <end position="237"/>
    </location>
    <ligand>
        <name>substrate</name>
    </ligand>
</feature>
<feature type="binding site" evidence="1">
    <location>
        <position position="273"/>
    </location>
    <ligand>
        <name>substrate</name>
    </ligand>
</feature>
<feature type="binding site" evidence="1">
    <location>
        <position position="277"/>
    </location>
    <ligand>
        <name>Zn(2+)</name>
        <dbReference type="ChEBI" id="CHEBI:29105"/>
    </ligand>
</feature>
<feature type="binding site" evidence="1">
    <location>
        <position position="300"/>
    </location>
    <ligand>
        <name>substrate</name>
    </ligand>
</feature>
<feature type="binding site" evidence="1">
    <location>
        <position position="341"/>
    </location>
    <ligand>
        <name>Zn(2+)</name>
        <dbReference type="ChEBI" id="CHEBI:29105"/>
    </ligand>
</feature>
<feature type="binding site" evidence="1">
    <location>
        <position position="421"/>
    </location>
    <ligand>
        <name>[4Fe-4S] cluster</name>
        <dbReference type="ChEBI" id="CHEBI:49883"/>
        <note>4Fe-4S-S-AdoMet</note>
    </ligand>
</feature>
<feature type="binding site" evidence="1">
    <location>
        <position position="424"/>
    </location>
    <ligand>
        <name>[4Fe-4S] cluster</name>
        <dbReference type="ChEBI" id="CHEBI:49883"/>
        <note>4Fe-4S-S-AdoMet</note>
    </ligand>
</feature>
<feature type="binding site" evidence="1">
    <location>
        <position position="429"/>
    </location>
    <ligand>
        <name>[4Fe-4S] cluster</name>
        <dbReference type="ChEBI" id="CHEBI:49883"/>
        <note>4Fe-4S-S-AdoMet</note>
    </ligand>
</feature>
<keyword id="KW-0004">4Fe-4S</keyword>
<keyword id="KW-0408">Iron</keyword>
<keyword id="KW-0411">Iron-sulfur</keyword>
<keyword id="KW-0456">Lyase</keyword>
<keyword id="KW-0479">Metal-binding</keyword>
<keyword id="KW-1185">Reference proteome</keyword>
<keyword id="KW-0949">S-adenosyl-L-methionine</keyword>
<keyword id="KW-0784">Thiamine biosynthesis</keyword>
<keyword id="KW-0862">Zinc</keyword>
<name>THIC_CAMHC</name>
<protein>
    <recommendedName>
        <fullName evidence="1">Phosphomethylpyrimidine synthase</fullName>
        <ecNumber evidence="1">4.1.99.17</ecNumber>
    </recommendedName>
    <alternativeName>
        <fullName evidence="1">Hydroxymethylpyrimidine phosphate synthase</fullName>
        <shortName evidence="1">HMP-P synthase</shortName>
        <shortName evidence="1">HMP-phosphate synthase</shortName>
        <shortName evidence="1">HMPP synthase</shortName>
    </alternativeName>
    <alternativeName>
        <fullName evidence="1">Thiamine biosynthesis protein ThiC</fullName>
    </alternativeName>
</protein>
<evidence type="ECO:0000255" key="1">
    <source>
        <dbReference type="HAMAP-Rule" id="MF_00089"/>
    </source>
</evidence>
<reference key="1">
    <citation type="submission" date="2007-07" db="EMBL/GenBank/DDBJ databases">
        <title>Complete genome sequence of Campylobacter hominis ATCC BAA-381, a commensal isolated from the human gastrointestinal tract.</title>
        <authorList>
            <person name="Fouts D.E."/>
            <person name="Mongodin E.F."/>
            <person name="Puiu D."/>
            <person name="Sebastian Y."/>
            <person name="Miller W.G."/>
            <person name="Mandrell R.E."/>
            <person name="Nelson K.E."/>
        </authorList>
    </citation>
    <scope>NUCLEOTIDE SEQUENCE [LARGE SCALE GENOMIC DNA]</scope>
    <source>
        <strain>ATCC BAA-381 / DSM 21671 / CCUG 45161 / LMG 19568 / NCTC 13146 / CH001A</strain>
    </source>
</reference>
<sequence length="449" mass="49885">MRSQWLKNRKNDKTPTQMYYAKNGIITEEMRYVAKIEQMDAEILRSEVARGKTIIPANINHTNLVPMGIGRSLKCKINSNIGSSSVSSGVEEEVEKLKISIKYGADTVMDLSTGGDLNEIRTQIIKNSTVPIGTVPIYQIIHDVGSIENLTISQMLKTIENQAIQGVSYFTIHAGFLLEFMPLVAKRKMGIVSRGGSLMATWMMKNHKENPFFTAFDEILEICAKYDVSLSLGDSLRPGCIYDASDAAQISELKILGDLARRAWTKNVQVMIEGPGHVPFNEIASNMQLERVLCDDAPFYVLGPLPTDIGAGYDHITSAIGGTMAAFSGASMLCYVTPKEHLGLPNAKDVREGIVAHKIAAHIADVALGKKGAIERDHAMSDARYNFDWNKQFELSLDPDRAKEYHDETLPQEVFKEAEFCSMCGPKFCAYKISREISKNSCEFYKECK</sequence>
<accession>A7I162</accession>
<gene>
    <name evidence="1" type="primary">thiC</name>
    <name type="ordered locus">CHAB381_0672</name>
</gene>
<comment type="function">
    <text evidence="1">Catalyzes the synthesis of the hydroxymethylpyrimidine phosphate (HMP-P) moiety of thiamine from aminoimidazole ribotide (AIR) in a radical S-adenosyl-L-methionine (SAM)-dependent reaction.</text>
</comment>
<comment type="catalytic activity">
    <reaction evidence="1">
        <text>5-amino-1-(5-phospho-beta-D-ribosyl)imidazole + S-adenosyl-L-methionine = 4-amino-2-methyl-5-(phosphooxymethyl)pyrimidine + CO + 5'-deoxyadenosine + formate + L-methionine + 3 H(+)</text>
        <dbReference type="Rhea" id="RHEA:24840"/>
        <dbReference type="ChEBI" id="CHEBI:15378"/>
        <dbReference type="ChEBI" id="CHEBI:15740"/>
        <dbReference type="ChEBI" id="CHEBI:17245"/>
        <dbReference type="ChEBI" id="CHEBI:17319"/>
        <dbReference type="ChEBI" id="CHEBI:57844"/>
        <dbReference type="ChEBI" id="CHEBI:58354"/>
        <dbReference type="ChEBI" id="CHEBI:59789"/>
        <dbReference type="ChEBI" id="CHEBI:137981"/>
        <dbReference type="EC" id="4.1.99.17"/>
    </reaction>
</comment>
<comment type="cofactor">
    <cofactor evidence="1">
        <name>[4Fe-4S] cluster</name>
        <dbReference type="ChEBI" id="CHEBI:49883"/>
    </cofactor>
    <text evidence="1">Binds 1 [4Fe-4S] cluster per subunit. The cluster is coordinated with 3 cysteines and an exchangeable S-adenosyl-L-methionine.</text>
</comment>
<comment type="pathway">
    <text evidence="1">Cofactor biosynthesis; thiamine diphosphate biosynthesis.</text>
</comment>
<comment type="subunit">
    <text evidence="1">Homodimer.</text>
</comment>
<comment type="similarity">
    <text evidence="1">Belongs to the ThiC family.</text>
</comment>